<sequence length="208" mass="23292">MNNLQEQLIALGGVFQAAVLVDRIARTGQASEANIGCMLGSLLVRDPKDTLEVFGGDDLNLRDGYRALVGALERDPSSLQREPLRYALSMLGLERQLNKRGDMLDIIGNRLPQIQSQADHFGLVHENVIASSGALYQDTLSTLRQRIQVHGDMRFLQQASNASKIRALLLAGIRAARLWRQLGGHRWQLVFSRRKLLKELYGMMRTTD</sequence>
<accession>Q1IBE5</accession>
<keyword id="KW-0997">Cell inner membrane</keyword>
<keyword id="KW-1003">Cell membrane</keyword>
<keyword id="KW-0963">Cytoplasm</keyword>
<keyword id="KW-0472">Membrane</keyword>
<dbReference type="EMBL" id="CT573326">
    <property type="protein sequence ID" value="CAK15020.1"/>
    <property type="molecule type" value="Genomic_DNA"/>
</dbReference>
<dbReference type="RefSeq" id="WP_011533423.1">
    <property type="nucleotide sequence ID" value="NC_008027.1"/>
</dbReference>
<dbReference type="SMR" id="Q1IBE5"/>
<dbReference type="STRING" id="384676.PSEEN2199"/>
<dbReference type="GeneID" id="32805398"/>
<dbReference type="KEGG" id="pen:PSEEN2199"/>
<dbReference type="eggNOG" id="COG2915">
    <property type="taxonomic scope" value="Bacteria"/>
</dbReference>
<dbReference type="HOGENOM" id="CLU_098920_0_0_6"/>
<dbReference type="OrthoDB" id="9788031at2"/>
<dbReference type="Proteomes" id="UP000000658">
    <property type="component" value="Chromosome"/>
</dbReference>
<dbReference type="GO" id="GO:0005737">
    <property type="term" value="C:cytoplasm"/>
    <property type="evidence" value="ECO:0007669"/>
    <property type="project" value="UniProtKB-SubCell"/>
</dbReference>
<dbReference type="GO" id="GO:0005886">
    <property type="term" value="C:plasma membrane"/>
    <property type="evidence" value="ECO:0007669"/>
    <property type="project" value="UniProtKB-SubCell"/>
</dbReference>
<dbReference type="Gene3D" id="1.10.3890.10">
    <property type="entry name" value="HflD-like"/>
    <property type="match status" value="1"/>
</dbReference>
<dbReference type="HAMAP" id="MF_00695">
    <property type="entry name" value="HflD_protein"/>
    <property type="match status" value="1"/>
</dbReference>
<dbReference type="InterPro" id="IPR007451">
    <property type="entry name" value="HflD"/>
</dbReference>
<dbReference type="InterPro" id="IPR035932">
    <property type="entry name" value="HflD-like_sf"/>
</dbReference>
<dbReference type="NCBIfam" id="NF001246">
    <property type="entry name" value="PRK00218.1-2"/>
    <property type="match status" value="1"/>
</dbReference>
<dbReference type="NCBIfam" id="NF001247">
    <property type="entry name" value="PRK00218.1-3"/>
    <property type="match status" value="1"/>
</dbReference>
<dbReference type="PANTHER" id="PTHR38100">
    <property type="entry name" value="HIGH FREQUENCY LYSOGENIZATION PROTEIN HFLD"/>
    <property type="match status" value="1"/>
</dbReference>
<dbReference type="PANTHER" id="PTHR38100:SF1">
    <property type="entry name" value="HIGH FREQUENCY LYSOGENIZATION PROTEIN HFLD"/>
    <property type="match status" value="1"/>
</dbReference>
<dbReference type="Pfam" id="PF04356">
    <property type="entry name" value="DUF489"/>
    <property type="match status" value="1"/>
</dbReference>
<dbReference type="SUPFAM" id="SSF101322">
    <property type="entry name" value="YcfC-like"/>
    <property type="match status" value="1"/>
</dbReference>
<comment type="subcellular location">
    <subcellularLocation>
        <location>Cytoplasm</location>
    </subcellularLocation>
    <subcellularLocation>
        <location evidence="1">Cell inner membrane</location>
        <topology evidence="1">Peripheral membrane protein</topology>
        <orientation evidence="1">Cytoplasmic side</orientation>
    </subcellularLocation>
</comment>
<comment type="similarity">
    <text evidence="1">Belongs to the HflD family.</text>
</comment>
<evidence type="ECO:0000255" key="1">
    <source>
        <dbReference type="HAMAP-Rule" id="MF_00695"/>
    </source>
</evidence>
<feature type="chain" id="PRO_1000045430" description="High frequency lysogenization protein HflD homolog">
    <location>
        <begin position="1"/>
        <end position="208"/>
    </location>
</feature>
<gene>
    <name evidence="1" type="primary">hflD</name>
    <name type="ordered locus">PSEEN2199</name>
</gene>
<protein>
    <recommendedName>
        <fullName evidence="1">High frequency lysogenization protein HflD homolog</fullName>
    </recommendedName>
</protein>
<reference key="1">
    <citation type="journal article" date="2006" name="Nat. Biotechnol.">
        <title>Complete genome sequence of the entomopathogenic and metabolically versatile soil bacterium Pseudomonas entomophila.</title>
        <authorList>
            <person name="Vodovar N."/>
            <person name="Vallenet D."/>
            <person name="Cruveiller S."/>
            <person name="Rouy Z."/>
            <person name="Barbe V."/>
            <person name="Acosta C."/>
            <person name="Cattolico L."/>
            <person name="Jubin C."/>
            <person name="Lajus A."/>
            <person name="Segurens B."/>
            <person name="Vacherie B."/>
            <person name="Wincker P."/>
            <person name="Weissenbach J."/>
            <person name="Lemaitre B."/>
            <person name="Medigue C."/>
            <person name="Boccard F."/>
        </authorList>
    </citation>
    <scope>NUCLEOTIDE SEQUENCE [LARGE SCALE GENOMIC DNA]</scope>
    <source>
        <strain>L48</strain>
    </source>
</reference>
<proteinExistence type="inferred from homology"/>
<organism>
    <name type="scientific">Pseudomonas entomophila (strain L48)</name>
    <dbReference type="NCBI Taxonomy" id="384676"/>
    <lineage>
        <taxon>Bacteria</taxon>
        <taxon>Pseudomonadati</taxon>
        <taxon>Pseudomonadota</taxon>
        <taxon>Gammaproteobacteria</taxon>
        <taxon>Pseudomonadales</taxon>
        <taxon>Pseudomonadaceae</taxon>
        <taxon>Pseudomonas</taxon>
    </lineage>
</organism>
<name>HFLD_PSEE4</name>